<gene>
    <name evidence="1" type="primary">ruvC</name>
    <name type="ordered locus">IL1087</name>
</gene>
<keyword id="KW-0963">Cytoplasm</keyword>
<keyword id="KW-0227">DNA damage</keyword>
<keyword id="KW-0233">DNA recombination</keyword>
<keyword id="KW-0234">DNA repair</keyword>
<keyword id="KW-0238">DNA-binding</keyword>
<keyword id="KW-0255">Endonuclease</keyword>
<keyword id="KW-0378">Hydrolase</keyword>
<keyword id="KW-0460">Magnesium</keyword>
<keyword id="KW-0479">Metal-binding</keyword>
<keyword id="KW-0540">Nuclease</keyword>
<keyword id="KW-1185">Reference proteome</keyword>
<name>RUVC_IDILO</name>
<protein>
    <recommendedName>
        <fullName evidence="1">Crossover junction endodeoxyribonuclease RuvC</fullName>
        <ecNumber evidence="1">3.1.21.10</ecNumber>
    </recommendedName>
    <alternativeName>
        <fullName evidence="1">Holliday junction nuclease RuvC</fullName>
    </alternativeName>
    <alternativeName>
        <fullName evidence="1">Holliday junction resolvase RuvC</fullName>
    </alternativeName>
</protein>
<comment type="function">
    <text evidence="1">The RuvA-RuvB-RuvC complex processes Holliday junction (HJ) DNA during genetic recombination and DNA repair. Endonuclease that resolves HJ intermediates. Cleaves cruciform DNA by making single-stranded nicks across the HJ at symmetrical positions within the homologous arms, yielding a 5'-phosphate and a 3'-hydroxyl group; requires a central core of homology in the junction. The consensus cleavage sequence is 5'-(A/T)TT(C/G)-3'. Cleavage occurs on the 3'-side of the TT dinucleotide at the point of strand exchange. HJ branch migration catalyzed by RuvA-RuvB allows RuvC to scan DNA until it finds its consensus sequence, where it cleaves and resolves the cruciform DNA.</text>
</comment>
<comment type="catalytic activity">
    <reaction evidence="1">
        <text>Endonucleolytic cleavage at a junction such as a reciprocal single-stranded crossover between two homologous DNA duplexes (Holliday junction).</text>
        <dbReference type="EC" id="3.1.21.10"/>
    </reaction>
</comment>
<comment type="cofactor">
    <cofactor evidence="1">
        <name>Mg(2+)</name>
        <dbReference type="ChEBI" id="CHEBI:18420"/>
    </cofactor>
    <text evidence="1">Binds 2 Mg(2+) ion per subunit.</text>
</comment>
<comment type="subunit">
    <text evidence="1">Homodimer which binds Holliday junction (HJ) DNA. The HJ becomes 2-fold symmetrical on binding to RuvC with unstacked arms; it has a different conformation from HJ DNA in complex with RuvA. In the full resolvosome a probable DNA-RuvA(4)-RuvB(12)-RuvC(2) complex forms which resolves the HJ.</text>
</comment>
<comment type="subcellular location">
    <subcellularLocation>
        <location evidence="1">Cytoplasm</location>
    </subcellularLocation>
</comment>
<comment type="similarity">
    <text evidence="1">Belongs to the RuvC family.</text>
</comment>
<proteinExistence type="inferred from homology"/>
<evidence type="ECO:0000255" key="1">
    <source>
        <dbReference type="HAMAP-Rule" id="MF_00034"/>
    </source>
</evidence>
<feature type="chain" id="PRO_0000225148" description="Crossover junction endodeoxyribonuclease RuvC">
    <location>
        <begin position="1"/>
        <end position="178"/>
    </location>
</feature>
<feature type="active site" evidence="1">
    <location>
        <position position="8"/>
    </location>
</feature>
<feature type="active site" evidence="1">
    <location>
        <position position="72"/>
    </location>
</feature>
<feature type="active site" evidence="1">
    <location>
        <position position="144"/>
    </location>
</feature>
<feature type="binding site" evidence="1">
    <location>
        <position position="8"/>
    </location>
    <ligand>
        <name>Mg(2+)</name>
        <dbReference type="ChEBI" id="CHEBI:18420"/>
        <label>1</label>
    </ligand>
</feature>
<feature type="binding site" evidence="1">
    <location>
        <position position="72"/>
    </location>
    <ligand>
        <name>Mg(2+)</name>
        <dbReference type="ChEBI" id="CHEBI:18420"/>
        <label>2</label>
    </ligand>
</feature>
<feature type="binding site" evidence="1">
    <location>
        <position position="144"/>
    </location>
    <ligand>
        <name>Mg(2+)</name>
        <dbReference type="ChEBI" id="CHEBI:18420"/>
        <label>1</label>
    </ligand>
</feature>
<dbReference type="EC" id="3.1.21.10" evidence="1"/>
<dbReference type="EMBL" id="AE017340">
    <property type="protein sequence ID" value="AAV81927.1"/>
    <property type="molecule type" value="Genomic_DNA"/>
</dbReference>
<dbReference type="RefSeq" id="WP_011234338.1">
    <property type="nucleotide sequence ID" value="NC_006512.1"/>
</dbReference>
<dbReference type="SMR" id="Q5QYV0"/>
<dbReference type="STRING" id="283942.IL1087"/>
<dbReference type="GeneID" id="41336255"/>
<dbReference type="KEGG" id="ilo:IL1087"/>
<dbReference type="eggNOG" id="COG0817">
    <property type="taxonomic scope" value="Bacteria"/>
</dbReference>
<dbReference type="HOGENOM" id="CLU_091257_2_1_6"/>
<dbReference type="OrthoDB" id="9805499at2"/>
<dbReference type="Proteomes" id="UP000001171">
    <property type="component" value="Chromosome"/>
</dbReference>
<dbReference type="GO" id="GO:0005737">
    <property type="term" value="C:cytoplasm"/>
    <property type="evidence" value="ECO:0007669"/>
    <property type="project" value="UniProtKB-SubCell"/>
</dbReference>
<dbReference type="GO" id="GO:0048476">
    <property type="term" value="C:Holliday junction resolvase complex"/>
    <property type="evidence" value="ECO:0007669"/>
    <property type="project" value="UniProtKB-UniRule"/>
</dbReference>
<dbReference type="GO" id="GO:0008821">
    <property type="term" value="F:crossover junction DNA endonuclease activity"/>
    <property type="evidence" value="ECO:0007669"/>
    <property type="project" value="UniProtKB-UniRule"/>
</dbReference>
<dbReference type="GO" id="GO:0003677">
    <property type="term" value="F:DNA binding"/>
    <property type="evidence" value="ECO:0007669"/>
    <property type="project" value="UniProtKB-KW"/>
</dbReference>
<dbReference type="GO" id="GO:0000287">
    <property type="term" value="F:magnesium ion binding"/>
    <property type="evidence" value="ECO:0007669"/>
    <property type="project" value="UniProtKB-UniRule"/>
</dbReference>
<dbReference type="GO" id="GO:0006310">
    <property type="term" value="P:DNA recombination"/>
    <property type="evidence" value="ECO:0007669"/>
    <property type="project" value="UniProtKB-UniRule"/>
</dbReference>
<dbReference type="GO" id="GO:0006281">
    <property type="term" value="P:DNA repair"/>
    <property type="evidence" value="ECO:0007669"/>
    <property type="project" value="UniProtKB-UniRule"/>
</dbReference>
<dbReference type="CDD" id="cd16962">
    <property type="entry name" value="RuvC"/>
    <property type="match status" value="1"/>
</dbReference>
<dbReference type="FunFam" id="3.30.420.10:FF:000002">
    <property type="entry name" value="Crossover junction endodeoxyribonuclease RuvC"/>
    <property type="match status" value="1"/>
</dbReference>
<dbReference type="Gene3D" id="3.30.420.10">
    <property type="entry name" value="Ribonuclease H-like superfamily/Ribonuclease H"/>
    <property type="match status" value="1"/>
</dbReference>
<dbReference type="HAMAP" id="MF_00034">
    <property type="entry name" value="RuvC"/>
    <property type="match status" value="1"/>
</dbReference>
<dbReference type="InterPro" id="IPR012337">
    <property type="entry name" value="RNaseH-like_sf"/>
</dbReference>
<dbReference type="InterPro" id="IPR036397">
    <property type="entry name" value="RNaseH_sf"/>
</dbReference>
<dbReference type="InterPro" id="IPR020563">
    <property type="entry name" value="X-over_junc_endoDNase_Mg_BS"/>
</dbReference>
<dbReference type="InterPro" id="IPR002176">
    <property type="entry name" value="X-over_junc_endoDNase_RuvC"/>
</dbReference>
<dbReference type="NCBIfam" id="TIGR00228">
    <property type="entry name" value="ruvC"/>
    <property type="match status" value="1"/>
</dbReference>
<dbReference type="PANTHER" id="PTHR30194">
    <property type="entry name" value="CROSSOVER JUNCTION ENDODEOXYRIBONUCLEASE RUVC"/>
    <property type="match status" value="1"/>
</dbReference>
<dbReference type="PANTHER" id="PTHR30194:SF3">
    <property type="entry name" value="CROSSOVER JUNCTION ENDODEOXYRIBONUCLEASE RUVC"/>
    <property type="match status" value="1"/>
</dbReference>
<dbReference type="Pfam" id="PF02075">
    <property type="entry name" value="RuvC"/>
    <property type="match status" value="1"/>
</dbReference>
<dbReference type="PRINTS" id="PR00696">
    <property type="entry name" value="RSOLVASERUVC"/>
</dbReference>
<dbReference type="SUPFAM" id="SSF53098">
    <property type="entry name" value="Ribonuclease H-like"/>
    <property type="match status" value="1"/>
</dbReference>
<dbReference type="PROSITE" id="PS01321">
    <property type="entry name" value="RUVC"/>
    <property type="match status" value="1"/>
</dbReference>
<sequence>MAIILGIDPGSRLTGYGVIEQRGRQLNYLGSGCIKVIGTTKEPLTLAEKLRRIHDSVSELITQFKPNEFAIEQVFMAKNPDSALKLGQARGAAIVAAACAELPVAEYSARQIKQSVVGNGGAEKSQVQHMVMALLNLQRCPQEDAADALAVALCHAHSSQNLIKMAGAARKTVRGRLR</sequence>
<accession>Q5QYV0</accession>
<reference key="1">
    <citation type="journal article" date="2004" name="Proc. Natl. Acad. Sci. U.S.A.">
        <title>Genome sequence of the deep-sea gamma-proteobacterium Idiomarina loihiensis reveals amino acid fermentation as a source of carbon and energy.</title>
        <authorList>
            <person name="Hou S."/>
            <person name="Saw J.H."/>
            <person name="Lee K.S."/>
            <person name="Freitas T.A."/>
            <person name="Belisle C."/>
            <person name="Kawarabayasi Y."/>
            <person name="Donachie S.P."/>
            <person name="Pikina A."/>
            <person name="Galperin M.Y."/>
            <person name="Koonin E.V."/>
            <person name="Makarova K.S."/>
            <person name="Omelchenko M.V."/>
            <person name="Sorokin A."/>
            <person name="Wolf Y.I."/>
            <person name="Li Q.X."/>
            <person name="Keum Y.S."/>
            <person name="Campbell S."/>
            <person name="Denery J."/>
            <person name="Aizawa S."/>
            <person name="Shibata S."/>
            <person name="Malahoff A."/>
            <person name="Alam M."/>
        </authorList>
    </citation>
    <scope>NUCLEOTIDE SEQUENCE [LARGE SCALE GENOMIC DNA]</scope>
    <source>
        <strain>ATCC BAA-735 / DSM 15497 / L2-TR</strain>
    </source>
</reference>
<organism>
    <name type="scientific">Idiomarina loihiensis (strain ATCC BAA-735 / DSM 15497 / L2-TR)</name>
    <dbReference type="NCBI Taxonomy" id="283942"/>
    <lineage>
        <taxon>Bacteria</taxon>
        <taxon>Pseudomonadati</taxon>
        <taxon>Pseudomonadota</taxon>
        <taxon>Gammaproteobacteria</taxon>
        <taxon>Alteromonadales</taxon>
        <taxon>Idiomarinaceae</taxon>
        <taxon>Idiomarina</taxon>
    </lineage>
</organism>